<comment type="function">
    <text evidence="1">Methylates the class 1 translation termination release factors RF1/PrfA and RF2/PrfB on the glutamine residue of the universally conserved GGQ motif.</text>
</comment>
<comment type="catalytic activity">
    <reaction evidence="1">
        <text>L-glutaminyl-[peptide chain release factor] + S-adenosyl-L-methionine = N(5)-methyl-L-glutaminyl-[peptide chain release factor] + S-adenosyl-L-homocysteine + H(+)</text>
        <dbReference type="Rhea" id="RHEA:42896"/>
        <dbReference type="Rhea" id="RHEA-COMP:10271"/>
        <dbReference type="Rhea" id="RHEA-COMP:10272"/>
        <dbReference type="ChEBI" id="CHEBI:15378"/>
        <dbReference type="ChEBI" id="CHEBI:30011"/>
        <dbReference type="ChEBI" id="CHEBI:57856"/>
        <dbReference type="ChEBI" id="CHEBI:59789"/>
        <dbReference type="ChEBI" id="CHEBI:61891"/>
        <dbReference type="EC" id="2.1.1.297"/>
    </reaction>
</comment>
<comment type="similarity">
    <text evidence="1">Belongs to the protein N5-glutamine methyltransferase family. PrmC subfamily.</text>
</comment>
<comment type="sequence caution" evidence="2">
    <conflict type="erroneous initiation">
        <sequence resource="EMBL-CDS" id="AAK22860"/>
    </conflict>
    <text>Extended N-terminus.</text>
</comment>
<keyword id="KW-0489">Methyltransferase</keyword>
<keyword id="KW-1185">Reference proteome</keyword>
<keyword id="KW-0949">S-adenosyl-L-methionine</keyword>
<keyword id="KW-0808">Transferase</keyword>
<dbReference type="EC" id="2.1.1.297" evidence="1"/>
<dbReference type="EMBL" id="AE005673">
    <property type="protein sequence ID" value="AAK22860.1"/>
    <property type="status" value="ALT_INIT"/>
    <property type="molecule type" value="Genomic_DNA"/>
</dbReference>
<dbReference type="PIR" id="H87357">
    <property type="entry name" value="H87357"/>
</dbReference>
<dbReference type="RefSeq" id="NP_419692.1">
    <property type="nucleotide sequence ID" value="NC_002696.2"/>
</dbReference>
<dbReference type="RefSeq" id="WP_012640077.1">
    <property type="nucleotide sequence ID" value="NC_002696.2"/>
</dbReference>
<dbReference type="SMR" id="Q9A9T7"/>
<dbReference type="STRING" id="190650.CC_0875"/>
<dbReference type="EnsemblBacteria" id="AAK22860">
    <property type="protein sequence ID" value="AAK22860"/>
    <property type="gene ID" value="CC_0875"/>
</dbReference>
<dbReference type="KEGG" id="ccr:CC_0875"/>
<dbReference type="PATRIC" id="fig|190650.5.peg.888"/>
<dbReference type="eggNOG" id="COG2890">
    <property type="taxonomic scope" value="Bacteria"/>
</dbReference>
<dbReference type="HOGENOM" id="CLU_018398_3_1_5"/>
<dbReference type="Proteomes" id="UP000001816">
    <property type="component" value="Chromosome"/>
</dbReference>
<dbReference type="GO" id="GO:0003676">
    <property type="term" value="F:nucleic acid binding"/>
    <property type="evidence" value="ECO:0007669"/>
    <property type="project" value="InterPro"/>
</dbReference>
<dbReference type="GO" id="GO:0102559">
    <property type="term" value="F:protein-(glutamine-N5) methyltransferase activity"/>
    <property type="evidence" value="ECO:0007669"/>
    <property type="project" value="UniProtKB-EC"/>
</dbReference>
<dbReference type="GO" id="GO:0036009">
    <property type="term" value="F:protein-glutamine N-methyltransferase activity"/>
    <property type="evidence" value="ECO:0007669"/>
    <property type="project" value="UniProtKB-UniRule"/>
</dbReference>
<dbReference type="GO" id="GO:0032259">
    <property type="term" value="P:methylation"/>
    <property type="evidence" value="ECO:0007669"/>
    <property type="project" value="UniProtKB-KW"/>
</dbReference>
<dbReference type="CDD" id="cd02440">
    <property type="entry name" value="AdoMet_MTases"/>
    <property type="match status" value="1"/>
</dbReference>
<dbReference type="Gene3D" id="1.10.8.10">
    <property type="entry name" value="DNA helicase RuvA subunit, C-terminal domain"/>
    <property type="match status" value="1"/>
</dbReference>
<dbReference type="Gene3D" id="3.40.50.150">
    <property type="entry name" value="Vaccinia Virus protein VP39"/>
    <property type="match status" value="1"/>
</dbReference>
<dbReference type="HAMAP" id="MF_02126">
    <property type="entry name" value="RF_methyltr_PrmC"/>
    <property type="match status" value="1"/>
</dbReference>
<dbReference type="InterPro" id="IPR002052">
    <property type="entry name" value="DNA_methylase_N6_adenine_CS"/>
</dbReference>
<dbReference type="InterPro" id="IPR004556">
    <property type="entry name" value="HemK-like"/>
</dbReference>
<dbReference type="InterPro" id="IPR025714">
    <property type="entry name" value="Methyltranfer_dom"/>
</dbReference>
<dbReference type="InterPro" id="IPR050320">
    <property type="entry name" value="N5-glutamine_MTase"/>
</dbReference>
<dbReference type="InterPro" id="IPR040758">
    <property type="entry name" value="PrmC_N"/>
</dbReference>
<dbReference type="InterPro" id="IPR019874">
    <property type="entry name" value="RF_methyltr_PrmC"/>
</dbReference>
<dbReference type="InterPro" id="IPR029063">
    <property type="entry name" value="SAM-dependent_MTases_sf"/>
</dbReference>
<dbReference type="NCBIfam" id="TIGR00536">
    <property type="entry name" value="hemK_fam"/>
    <property type="match status" value="1"/>
</dbReference>
<dbReference type="NCBIfam" id="TIGR03534">
    <property type="entry name" value="RF_mod_PrmC"/>
    <property type="match status" value="1"/>
</dbReference>
<dbReference type="PANTHER" id="PTHR18895">
    <property type="entry name" value="HEMK METHYLTRANSFERASE"/>
    <property type="match status" value="1"/>
</dbReference>
<dbReference type="PANTHER" id="PTHR18895:SF74">
    <property type="entry name" value="MTRF1L RELEASE FACTOR GLUTAMINE METHYLTRANSFERASE"/>
    <property type="match status" value="1"/>
</dbReference>
<dbReference type="Pfam" id="PF13847">
    <property type="entry name" value="Methyltransf_31"/>
    <property type="match status" value="1"/>
</dbReference>
<dbReference type="Pfam" id="PF17827">
    <property type="entry name" value="PrmC_N"/>
    <property type="match status" value="1"/>
</dbReference>
<dbReference type="PRINTS" id="PR00507">
    <property type="entry name" value="N12N6MTFRASE"/>
</dbReference>
<dbReference type="SUPFAM" id="SSF53335">
    <property type="entry name" value="S-adenosyl-L-methionine-dependent methyltransferases"/>
    <property type="match status" value="1"/>
</dbReference>
<organism>
    <name type="scientific">Caulobacter vibrioides (strain ATCC 19089 / CIP 103742 / CB 15)</name>
    <name type="common">Caulobacter crescentus</name>
    <dbReference type="NCBI Taxonomy" id="190650"/>
    <lineage>
        <taxon>Bacteria</taxon>
        <taxon>Pseudomonadati</taxon>
        <taxon>Pseudomonadota</taxon>
        <taxon>Alphaproteobacteria</taxon>
        <taxon>Caulobacterales</taxon>
        <taxon>Caulobacteraceae</taxon>
        <taxon>Caulobacter</taxon>
    </lineage>
</organism>
<evidence type="ECO:0000255" key="1">
    <source>
        <dbReference type="HAMAP-Rule" id="MF_02126"/>
    </source>
</evidence>
<evidence type="ECO:0000305" key="2"/>
<sequence length="289" mass="31324">MTLTLVKAWTAAKDRLKDAGIDQPSIDARLMLEVAAGVTRTEIVTDPYRELSAEQIATLNDYLERRARREPVSHIIGRKGFWKILLQVNKNVLTPRPETEVIVDEVLKAFPEHMAFSMLDLGVGSGTILLAVLAERPAAKGLGIDASSEALAVARENAANLDLNTRAALLHGDWTTGLGSDSFDLVVSNPPYIPTEVIDTLEPEVRIHEPRLALDGGPDGLAAYRELAPEILRVLKPGGLFAVEIGYDQSQAVEALFRAAGATEVRTVKDLSTHDRVVLGVKNPLESPA</sequence>
<accession>Q9A9T7</accession>
<feature type="chain" id="PRO_0000414507" description="Release factor glutamine methyltransferase">
    <location>
        <begin position="1"/>
        <end position="289"/>
    </location>
</feature>
<feature type="binding site" evidence="1">
    <location>
        <begin position="122"/>
        <end position="126"/>
    </location>
    <ligand>
        <name>S-adenosyl-L-methionine</name>
        <dbReference type="ChEBI" id="CHEBI:59789"/>
    </ligand>
</feature>
<feature type="binding site" evidence="1">
    <location>
        <position position="145"/>
    </location>
    <ligand>
        <name>S-adenosyl-L-methionine</name>
        <dbReference type="ChEBI" id="CHEBI:59789"/>
    </ligand>
</feature>
<feature type="binding site" evidence="1">
    <location>
        <position position="174"/>
    </location>
    <ligand>
        <name>S-adenosyl-L-methionine</name>
        <dbReference type="ChEBI" id="CHEBI:59789"/>
    </ligand>
</feature>
<feature type="binding site" evidence="1">
    <location>
        <begin position="189"/>
        <end position="192"/>
    </location>
    <ligand>
        <name>substrate</name>
    </ligand>
</feature>
<feature type="binding site" evidence="1">
    <location>
        <position position="189"/>
    </location>
    <ligand>
        <name>S-adenosyl-L-methionine</name>
        <dbReference type="ChEBI" id="CHEBI:59789"/>
    </ligand>
</feature>
<protein>
    <recommendedName>
        <fullName evidence="1">Release factor glutamine methyltransferase</fullName>
        <shortName evidence="1">RF MTase</shortName>
        <ecNumber evidence="1">2.1.1.297</ecNumber>
    </recommendedName>
    <alternativeName>
        <fullName evidence="1">N5-glutamine methyltransferase PrmC</fullName>
    </alternativeName>
    <alternativeName>
        <fullName evidence="1">Protein-(glutamine-N5) MTase PrmC</fullName>
    </alternativeName>
    <alternativeName>
        <fullName evidence="1">Protein-glutamine N-methyltransferase PrmC</fullName>
    </alternativeName>
</protein>
<reference key="1">
    <citation type="journal article" date="2001" name="Proc. Natl. Acad. Sci. U.S.A.">
        <title>Complete genome sequence of Caulobacter crescentus.</title>
        <authorList>
            <person name="Nierman W.C."/>
            <person name="Feldblyum T.V."/>
            <person name="Laub M.T."/>
            <person name="Paulsen I.T."/>
            <person name="Nelson K.E."/>
            <person name="Eisen J.A."/>
            <person name="Heidelberg J.F."/>
            <person name="Alley M.R.K."/>
            <person name="Ohta N."/>
            <person name="Maddock J.R."/>
            <person name="Potocka I."/>
            <person name="Nelson W.C."/>
            <person name="Newton A."/>
            <person name="Stephens C."/>
            <person name="Phadke N.D."/>
            <person name="Ely B."/>
            <person name="DeBoy R.T."/>
            <person name="Dodson R.J."/>
            <person name="Durkin A.S."/>
            <person name="Gwinn M.L."/>
            <person name="Haft D.H."/>
            <person name="Kolonay J.F."/>
            <person name="Smit J."/>
            <person name="Craven M.B."/>
            <person name="Khouri H.M."/>
            <person name="Shetty J."/>
            <person name="Berry K.J."/>
            <person name="Utterback T.R."/>
            <person name="Tran K."/>
            <person name="Wolf A.M."/>
            <person name="Vamathevan J.J."/>
            <person name="Ermolaeva M.D."/>
            <person name="White O."/>
            <person name="Salzberg S.L."/>
            <person name="Venter J.C."/>
            <person name="Shapiro L."/>
            <person name="Fraser C.M."/>
        </authorList>
    </citation>
    <scope>NUCLEOTIDE SEQUENCE [LARGE SCALE GENOMIC DNA]</scope>
    <source>
        <strain>ATCC 19089 / CIP 103742 / CB 15</strain>
    </source>
</reference>
<proteinExistence type="inferred from homology"/>
<name>PRMC_CAUVC</name>
<gene>
    <name evidence="1" type="primary">prmC</name>
    <name type="ordered locus">CC_0875</name>
</gene>